<proteinExistence type="evidence at protein level"/>
<name>PMAT2_ARATH</name>
<feature type="chain" id="PRO_0000419543" description="Phenolic glucoside malonyltransferase 2">
    <location>
        <begin position="1"/>
        <end position="451"/>
    </location>
</feature>
<feature type="short sequence motif" description="HXXXD motif" evidence="1">
    <location>
        <begin position="165"/>
        <end position="169"/>
    </location>
</feature>
<feature type="short sequence motif" description="DFGWG motif" evidence="1">
    <location>
        <begin position="395"/>
        <end position="399"/>
    </location>
</feature>
<feature type="active site" description="Proton acceptor" evidence="2">
    <location>
        <position position="165"/>
    </location>
</feature>
<feature type="active site" description="Proton acceptor" evidence="2">
    <location>
        <position position="395"/>
    </location>
</feature>
<feature type="binding site" evidence="1">
    <location>
        <position position="270"/>
    </location>
    <ligand>
        <name>malonyl-CoA</name>
        <dbReference type="ChEBI" id="CHEBI:57384"/>
    </ligand>
</feature>
<feature type="binding site" evidence="1">
    <location>
        <begin position="272"/>
        <end position="273"/>
    </location>
    <ligand>
        <name>malonyl-CoA</name>
        <dbReference type="ChEBI" id="CHEBI:57384"/>
    </ligand>
</feature>
<comment type="function">
    <text evidence="4">Malonyltransferase acting on xenobiotic glucosides. Has activity toward 2-Naphthol glucoside (2NAG), 1-Naphthol glucoside (1NAG), kaempferol 7-O-glucoside, hydroxycoumarin glucosides and phenol-glucosides, but not toward kaempferol 3-O-glucoside or daidzin. Prefers phenol glucosides rather than naphtol glucosides. In vivo, seems to be involved in the malonylation of 4-methylumbelliferone glucoside or 4-nitrophenyl glucoside while PMAT1 would be involved in the malonylation of 2-Naphthol glucoside.</text>
</comment>
<comment type="catalytic activity">
    <reaction evidence="4">
        <text>a flavonol 7-O-beta-D-glucoside + malonyl-CoA = a flavonol 7-O-(6-O-malonyl-beta-D-glucoside) + CoA</text>
        <dbReference type="Rhea" id="RHEA:58796"/>
        <dbReference type="ChEBI" id="CHEBI:52144"/>
        <dbReference type="ChEBI" id="CHEBI:57287"/>
        <dbReference type="ChEBI" id="CHEBI:57384"/>
        <dbReference type="ChEBI" id="CHEBI:142805"/>
    </reaction>
    <physiologicalReaction direction="left-to-right" evidence="4">
        <dbReference type="Rhea" id="RHEA:58797"/>
    </physiologicalReaction>
</comment>
<comment type="induction">
    <text evidence="3">Up-regulated by high sucrose and by low phosphate stresses.</text>
</comment>
<comment type="similarity">
    <text evidence="5">Belongs to the plant acyltransferase family. Phenolic glucoside malonyltransferase subfamily.</text>
</comment>
<organism>
    <name type="scientific">Arabidopsis thaliana</name>
    <name type="common">Mouse-ear cress</name>
    <dbReference type="NCBI Taxonomy" id="3702"/>
    <lineage>
        <taxon>Eukaryota</taxon>
        <taxon>Viridiplantae</taxon>
        <taxon>Streptophyta</taxon>
        <taxon>Embryophyta</taxon>
        <taxon>Tracheophyta</taxon>
        <taxon>Spermatophyta</taxon>
        <taxon>Magnoliopsida</taxon>
        <taxon>eudicotyledons</taxon>
        <taxon>Gunneridae</taxon>
        <taxon>Pentapetalae</taxon>
        <taxon>rosids</taxon>
        <taxon>malvids</taxon>
        <taxon>Brassicales</taxon>
        <taxon>Brassicaceae</taxon>
        <taxon>Camelineae</taxon>
        <taxon>Arabidopsis</taxon>
    </lineage>
</organism>
<keyword id="KW-0012">Acyltransferase</keyword>
<keyword id="KW-0216">Detoxification</keyword>
<keyword id="KW-1185">Reference proteome</keyword>
<keyword id="KW-0808">Transferase</keyword>
<accession>Q9LRQ8</accession>
<sequence length="451" mass="50217">MTLHVIETARVTPTDYSVINSANLHKLPLTFFDLPWLLFQPVKRVFFYELTESTRDHFHSIILPKLKDSLSLILRNYLPLTGHITWEPNEPKPSIIVSENGVVLVTIAESDADFSHLSGYGQRPLSELHALVPKLPVSDDSATAFSIQITLFPNQGFSIGVAAHHAVLDGKTSSTFIKAWAQICKQELQSMPENLTPSYDRSLIKYPTYLDEKMIELVRSLKEDQTNIRSLTSLPSSKLGDDVVLATLVLSRADIERLREQVKNVSPSLHLSTFVIAYAYAWTCFVKARGGNKDRSVSLLFVGDFRDRLDPKLPGTYFGNCMIPVGCYNRKAAEFMEEKGFVTAAEIISDLVKGLSSRKIETIADTFVEGFSFQSWSTQFGTIAGSTRLGVYEADFGWGRPVKVDIVSIDQGEAIAMAERRDESGGVEIGMCLKKTEMDSVVSFFNNGLHS</sequence>
<protein>
    <recommendedName>
        <fullName>Phenolic glucoside malonyltransferase 2</fullName>
        <ecNumber evidence="4">2.3.1.-</ecNumber>
    </recommendedName>
</protein>
<dbReference type="EC" id="2.3.1.-" evidence="4"/>
<dbReference type="EMBL" id="AB028618">
    <property type="protein sequence ID" value="BAB02518.1"/>
    <property type="molecule type" value="Genomic_DNA"/>
</dbReference>
<dbReference type="EMBL" id="CP002686">
    <property type="protein sequence ID" value="AEE77599.1"/>
    <property type="molecule type" value="Genomic_DNA"/>
</dbReference>
<dbReference type="EMBL" id="AK118746">
    <property type="protein sequence ID" value="BAC43339.1"/>
    <property type="molecule type" value="mRNA"/>
</dbReference>
<dbReference type="EMBL" id="BT006030">
    <property type="protein sequence ID" value="AAP04017.1"/>
    <property type="molecule type" value="mRNA"/>
</dbReference>
<dbReference type="RefSeq" id="NP_189609.1">
    <property type="nucleotide sequence ID" value="NM_113889.3"/>
</dbReference>
<dbReference type="SMR" id="Q9LRQ8"/>
<dbReference type="FunCoup" id="Q9LRQ8">
    <property type="interactions" value="1"/>
</dbReference>
<dbReference type="STRING" id="3702.Q9LRQ8"/>
<dbReference type="GlyGen" id="Q9LRQ8">
    <property type="glycosylation" value="1 site"/>
</dbReference>
<dbReference type="PaxDb" id="3702-AT3G29670.1"/>
<dbReference type="ProteomicsDB" id="234936"/>
<dbReference type="DNASU" id="822645"/>
<dbReference type="EnsemblPlants" id="AT3G29670.1">
    <property type="protein sequence ID" value="AT3G29670.1"/>
    <property type="gene ID" value="AT3G29670"/>
</dbReference>
<dbReference type="GeneID" id="822645"/>
<dbReference type="Gramene" id="AT3G29670.1">
    <property type="protein sequence ID" value="AT3G29670.1"/>
    <property type="gene ID" value="AT3G29670"/>
</dbReference>
<dbReference type="KEGG" id="ath:AT3G29670"/>
<dbReference type="Araport" id="AT3G29670"/>
<dbReference type="TAIR" id="AT3G29670">
    <property type="gene designation" value="PMAT2"/>
</dbReference>
<dbReference type="eggNOG" id="ENOG502QPXT">
    <property type="taxonomic scope" value="Eukaryota"/>
</dbReference>
<dbReference type="HOGENOM" id="CLU_014546_7_0_1"/>
<dbReference type="InParanoid" id="Q9LRQ8"/>
<dbReference type="OMA" id="RWVERIT"/>
<dbReference type="PhylomeDB" id="Q9LRQ8"/>
<dbReference type="BioCyc" id="ARA:AT3G29670-MONOMER"/>
<dbReference type="BioCyc" id="MetaCyc:AT3G29670-MONOMER"/>
<dbReference type="PRO" id="PR:Q9LRQ8"/>
<dbReference type="Proteomes" id="UP000006548">
    <property type="component" value="Chromosome 3"/>
</dbReference>
<dbReference type="ExpressionAtlas" id="Q9LRQ8">
    <property type="expression patterns" value="baseline and differential"/>
</dbReference>
<dbReference type="GO" id="GO:0050736">
    <property type="term" value="F:O-malonyltransferase activity"/>
    <property type="evidence" value="ECO:0000314"/>
    <property type="project" value="TAIR"/>
</dbReference>
<dbReference type="GO" id="GO:0009636">
    <property type="term" value="P:response to toxic substance"/>
    <property type="evidence" value="ECO:0007669"/>
    <property type="project" value="UniProtKB-KW"/>
</dbReference>
<dbReference type="FunFam" id="3.30.559.10:FF:000035">
    <property type="entry name" value="Phenolic glucoside malonyltransferase 1"/>
    <property type="match status" value="1"/>
</dbReference>
<dbReference type="FunFam" id="3.30.559.10:FF:000046">
    <property type="entry name" value="Phenolic glucoside malonyltransferase 1"/>
    <property type="match status" value="1"/>
</dbReference>
<dbReference type="Gene3D" id="3.30.559.10">
    <property type="entry name" value="Chloramphenicol acetyltransferase-like domain"/>
    <property type="match status" value="2"/>
</dbReference>
<dbReference type="InterPro" id="IPR023213">
    <property type="entry name" value="CAT-like_dom_sf"/>
</dbReference>
<dbReference type="InterPro" id="IPR051504">
    <property type="entry name" value="Plant_metabolite_acyltrans"/>
</dbReference>
<dbReference type="PANTHER" id="PTHR31625">
    <property type="match status" value="1"/>
</dbReference>
<dbReference type="Pfam" id="PF02458">
    <property type="entry name" value="Transferase"/>
    <property type="match status" value="1"/>
</dbReference>
<dbReference type="SUPFAM" id="SSF52777">
    <property type="entry name" value="CoA-dependent acyltransferases"/>
    <property type="match status" value="1"/>
</dbReference>
<gene>
    <name type="primary">PMAT2</name>
    <name type="ordered locus">At3g29670</name>
    <name type="ORF">MOD1_4</name>
</gene>
<evidence type="ECO:0000250" key="1">
    <source>
        <dbReference type="UniProtKB" id="Q589Y0"/>
    </source>
</evidence>
<evidence type="ECO:0000250" key="2">
    <source>
        <dbReference type="UniProtKB" id="Q8W1W9"/>
    </source>
</evidence>
<evidence type="ECO:0000269" key="3">
    <source>
    </source>
</evidence>
<evidence type="ECO:0000269" key="4">
    <source>
    </source>
</evidence>
<evidence type="ECO:0000305" key="5"/>
<reference key="1">
    <citation type="journal article" date="2000" name="DNA Res.">
        <title>Structural analysis of Arabidopsis thaliana chromosome 3. II. Sequence features of the 4,251,695 bp regions covered by 90 P1, TAC and BAC clones.</title>
        <authorList>
            <person name="Kaneko T."/>
            <person name="Katoh T."/>
            <person name="Sato S."/>
            <person name="Nakamura Y."/>
            <person name="Asamizu E."/>
            <person name="Tabata S."/>
        </authorList>
    </citation>
    <scope>NUCLEOTIDE SEQUENCE [LARGE SCALE GENOMIC DNA]</scope>
    <source>
        <strain>cv. Columbia</strain>
    </source>
</reference>
<reference key="2">
    <citation type="journal article" date="2017" name="Plant J.">
        <title>Araport11: a complete reannotation of the Arabidopsis thaliana reference genome.</title>
        <authorList>
            <person name="Cheng C.Y."/>
            <person name="Krishnakumar V."/>
            <person name="Chan A.P."/>
            <person name="Thibaud-Nissen F."/>
            <person name="Schobel S."/>
            <person name="Town C.D."/>
        </authorList>
    </citation>
    <scope>GENOME REANNOTATION</scope>
    <source>
        <strain>cv. Columbia</strain>
    </source>
</reference>
<reference key="3">
    <citation type="journal article" date="2002" name="Science">
        <title>Functional annotation of a full-length Arabidopsis cDNA collection.</title>
        <authorList>
            <person name="Seki M."/>
            <person name="Narusaka M."/>
            <person name="Kamiya A."/>
            <person name="Ishida J."/>
            <person name="Satou M."/>
            <person name="Sakurai T."/>
            <person name="Nakajima M."/>
            <person name="Enju A."/>
            <person name="Akiyama K."/>
            <person name="Oono Y."/>
            <person name="Muramatsu M."/>
            <person name="Hayashizaki Y."/>
            <person name="Kawai J."/>
            <person name="Carninci P."/>
            <person name="Itoh M."/>
            <person name="Ishii Y."/>
            <person name="Arakawa T."/>
            <person name="Shibata K."/>
            <person name="Shinagawa A."/>
            <person name="Shinozaki K."/>
        </authorList>
    </citation>
    <scope>NUCLEOTIDE SEQUENCE [LARGE SCALE MRNA]</scope>
    <source>
        <strain>cv. Columbia</strain>
    </source>
</reference>
<reference key="4">
    <citation type="journal article" date="2003" name="Science">
        <title>Empirical analysis of transcriptional activity in the Arabidopsis genome.</title>
        <authorList>
            <person name="Yamada K."/>
            <person name="Lim J."/>
            <person name="Dale J.M."/>
            <person name="Chen H."/>
            <person name="Shinn P."/>
            <person name="Palm C.J."/>
            <person name="Southwick A.M."/>
            <person name="Wu H.C."/>
            <person name="Kim C.J."/>
            <person name="Nguyen M."/>
            <person name="Pham P.K."/>
            <person name="Cheuk R.F."/>
            <person name="Karlin-Newmann G."/>
            <person name="Liu S.X."/>
            <person name="Lam B."/>
            <person name="Sakano H."/>
            <person name="Wu T."/>
            <person name="Yu G."/>
            <person name="Miranda M."/>
            <person name="Quach H.L."/>
            <person name="Tripp M."/>
            <person name="Chang C.H."/>
            <person name="Lee J.M."/>
            <person name="Toriumi M.J."/>
            <person name="Chan M.M."/>
            <person name="Tang C.C."/>
            <person name="Onodera C.S."/>
            <person name="Deng J.M."/>
            <person name="Akiyama K."/>
            <person name="Ansari Y."/>
            <person name="Arakawa T."/>
            <person name="Banh J."/>
            <person name="Banno F."/>
            <person name="Bowser L."/>
            <person name="Brooks S.Y."/>
            <person name="Carninci P."/>
            <person name="Chao Q."/>
            <person name="Choy N."/>
            <person name="Enju A."/>
            <person name="Goldsmith A.D."/>
            <person name="Gurjal M."/>
            <person name="Hansen N.F."/>
            <person name="Hayashizaki Y."/>
            <person name="Johnson-Hopson C."/>
            <person name="Hsuan V.W."/>
            <person name="Iida K."/>
            <person name="Karnes M."/>
            <person name="Khan S."/>
            <person name="Koesema E."/>
            <person name="Ishida J."/>
            <person name="Jiang P.X."/>
            <person name="Jones T."/>
            <person name="Kawai J."/>
            <person name="Kamiya A."/>
            <person name="Meyers C."/>
            <person name="Nakajima M."/>
            <person name="Narusaka M."/>
            <person name="Seki M."/>
            <person name="Sakurai T."/>
            <person name="Satou M."/>
            <person name="Tamse R."/>
            <person name="Vaysberg M."/>
            <person name="Wallender E.K."/>
            <person name="Wong C."/>
            <person name="Yamamura Y."/>
            <person name="Yuan S."/>
            <person name="Shinozaki K."/>
            <person name="Davis R.W."/>
            <person name="Theologis A."/>
            <person name="Ecker J.R."/>
        </authorList>
    </citation>
    <scope>NUCLEOTIDE SEQUENCE [LARGE SCALE MRNA]</scope>
    <source>
        <strain>cv. Columbia</strain>
    </source>
</reference>
<reference key="5">
    <citation type="journal article" date="2007" name="Plant J.">
        <title>Convergent evolution in the BAHD family of acyl transferases: identification and characterization of anthocyanin acyl transferases from Arabidopsis thaliana.</title>
        <authorList>
            <person name="Luo J."/>
            <person name="Nishiyama Y."/>
            <person name="Fuell C."/>
            <person name="Taguchi G."/>
            <person name="Elliott K."/>
            <person name="Hill L."/>
            <person name="Tanaka Y."/>
            <person name="Kitayama M."/>
            <person name="Yamazaki M."/>
            <person name="Bailey P."/>
            <person name="Parr A."/>
            <person name="Michael A.J."/>
            <person name="Saito K."/>
            <person name="Martin C."/>
        </authorList>
    </citation>
    <scope>IDENTIFICATION</scope>
    <scope>INDUCTION</scope>
</reference>
<reference key="6">
    <citation type="journal article" date="2010" name="Plant J.">
        <title>Malonylation is a key reaction in the metabolism of xenobiotic phenolic glucosides in Arabidopsis and tobacco.</title>
        <authorList>
            <person name="Taguchi G."/>
            <person name="Ubukata T."/>
            <person name="Nozue H."/>
            <person name="Kobayashi Y."/>
            <person name="Takahi M."/>
            <person name="Yamamoto H."/>
            <person name="Hayashida N."/>
        </authorList>
    </citation>
    <scope>FUNCTION</scope>
    <scope>CATALYTIC ACTIVITY</scope>
</reference>